<gene>
    <name type="primary">Hopx</name>
    <name type="synonym">Giig15b</name>
    <name type="synonym">Hod</name>
    <name type="synonym">Hop</name>
    <name type="synonym">Ob1</name>
</gene>
<feature type="chain" id="PRO_0000049132" description="Homeodomain-only protein">
    <location>
        <begin position="1"/>
        <end position="73"/>
    </location>
</feature>
<feature type="DNA-binding region" description="Homeobox; degenerate" evidence="3">
    <location>
        <begin position="3"/>
        <end position="62"/>
    </location>
</feature>
<feature type="sequence conflict" description="In Ref. 2; AAL85327." evidence="5" ref="2">
    <original>A</original>
    <variation>G</variation>
    <location>
        <position position="6"/>
    </location>
</feature>
<comment type="function">
    <text evidence="1 2">Atypical homeodomain protein which does not bind DNA and is required to modulate cardiac growth and development. Acts via its interaction with SRF, thereby modulating the expression of SRF-dependent cardiac-specific genes and cardiac development. Prevents SRF-dependent transcription either by inhibiting SRF binding to DNA or by recruiting histone deacetylase (HDAC) proteins that prevent transcription by SRF. Overexpression causes cardiac hypertrophy. Acts as a co-chaperone for HSPA1A and HSPA1B chaperone proteins and assists in chaperone-mediated protein refolding.</text>
</comment>
<comment type="subunit">
    <text evidence="1 2">Interacts with serum response factor (SRF). Component of a large complex containing histone deacetylases such as HDAC2. Interacts with the acetylated forms of HSPA1A and HSPA1B. Interacts with HSPA8.</text>
</comment>
<comment type="subcellular location">
    <subcellularLocation>
        <location evidence="4">Nucleus</location>
    </subcellularLocation>
</comment>
<protein>
    <recommendedName>
        <fullName>Homeodomain-only protein</fullName>
    </recommendedName>
    <alternativeName>
        <fullName>Global ischemia-induced gene 15B protein</fullName>
        <shortName>GIIg15b</shortName>
    </alternativeName>
    <alternativeName>
        <fullName>Odd homeobox protein 1</fullName>
    </alternativeName>
</protein>
<evidence type="ECO:0000250" key="1">
    <source>
        <dbReference type="UniProtKB" id="Q8R1H0"/>
    </source>
</evidence>
<evidence type="ECO:0000250" key="2">
    <source>
        <dbReference type="UniProtKB" id="Q9BPY8"/>
    </source>
</evidence>
<evidence type="ECO:0000255" key="3">
    <source>
        <dbReference type="PROSITE-ProRule" id="PRU00108"/>
    </source>
</evidence>
<evidence type="ECO:0000269" key="4">
    <source>
    </source>
</evidence>
<evidence type="ECO:0000305" key="5"/>
<proteinExistence type="evidence at protein level"/>
<organism>
    <name type="scientific">Rattus norvegicus</name>
    <name type="common">Rat</name>
    <dbReference type="NCBI Taxonomy" id="10116"/>
    <lineage>
        <taxon>Eukaryota</taxon>
        <taxon>Metazoa</taxon>
        <taxon>Chordata</taxon>
        <taxon>Craniata</taxon>
        <taxon>Vertebrata</taxon>
        <taxon>Euteleostomi</taxon>
        <taxon>Mammalia</taxon>
        <taxon>Eutheria</taxon>
        <taxon>Euarchontoglires</taxon>
        <taxon>Glires</taxon>
        <taxon>Rodentia</taxon>
        <taxon>Myomorpha</taxon>
        <taxon>Muroidea</taxon>
        <taxon>Muridae</taxon>
        <taxon>Murinae</taxon>
        <taxon>Rattus</taxon>
    </lineage>
</organism>
<sequence length="73" mass="8282">MSAQTASGPTEDQVEILEYNFNKVNKHPDPTTLCLIAAEAGLTEEQTQKWFKQRLAEWRRSEGLPSECRSVTD</sequence>
<accession>Q78ZR5</accession>
<accession>Q8R4G4</accession>
<dbReference type="EMBL" id="AF492685">
    <property type="protein sequence ID" value="AAM46837.1"/>
    <property type="molecule type" value="mRNA"/>
</dbReference>
<dbReference type="EMBL" id="AF474162">
    <property type="protein sequence ID" value="AAL85327.1"/>
    <property type="molecule type" value="mRNA"/>
</dbReference>
<dbReference type="EMBL" id="BC070950">
    <property type="protein sequence ID" value="AAH70950.1"/>
    <property type="molecule type" value="mRNA"/>
</dbReference>
<dbReference type="RefSeq" id="NP_598305.2">
    <property type="nucleotide sequence ID" value="NM_133621.2"/>
</dbReference>
<dbReference type="RefSeq" id="XP_038947523.1">
    <property type="nucleotide sequence ID" value="XM_039091595.2"/>
</dbReference>
<dbReference type="RefSeq" id="XP_038947524.1">
    <property type="nucleotide sequence ID" value="XM_039091596.1"/>
</dbReference>
<dbReference type="RefSeq" id="XP_038947525.1">
    <property type="nucleotide sequence ID" value="XM_039091597.2"/>
</dbReference>
<dbReference type="RefSeq" id="XP_038947526.1">
    <property type="nucleotide sequence ID" value="XM_039091598.2"/>
</dbReference>
<dbReference type="BMRB" id="Q78ZR5"/>
<dbReference type="SMR" id="Q78ZR5"/>
<dbReference type="FunCoup" id="Q78ZR5">
    <property type="interactions" value="269"/>
</dbReference>
<dbReference type="STRING" id="10116.ENSRNOP00000044357"/>
<dbReference type="GlyGen" id="Q78ZR5">
    <property type="glycosylation" value="1 site"/>
</dbReference>
<dbReference type="PhosphoSitePlus" id="Q78ZR5"/>
<dbReference type="PaxDb" id="10116-ENSRNOP00000044357"/>
<dbReference type="GeneID" id="171160"/>
<dbReference type="KEGG" id="rno:171160"/>
<dbReference type="UCSC" id="RGD:621841">
    <property type="organism name" value="rat"/>
</dbReference>
<dbReference type="AGR" id="RGD:621841"/>
<dbReference type="CTD" id="84525"/>
<dbReference type="RGD" id="621841">
    <property type="gene designation" value="Hopx"/>
</dbReference>
<dbReference type="VEuPathDB" id="HostDB:ENSRNOG00000024689"/>
<dbReference type="eggNOG" id="KOG0490">
    <property type="taxonomic scope" value="Eukaryota"/>
</dbReference>
<dbReference type="HOGENOM" id="CLU_193231_0_0_1"/>
<dbReference type="InParanoid" id="Q78ZR5"/>
<dbReference type="PhylomeDB" id="Q78ZR5"/>
<dbReference type="TreeFam" id="TF330730"/>
<dbReference type="PRO" id="PR:Q78ZR5"/>
<dbReference type="Proteomes" id="UP000002494">
    <property type="component" value="Chromosome 14"/>
</dbReference>
<dbReference type="Bgee" id="ENSRNOG00000024689">
    <property type="expression patterns" value="Expressed in esophagus and 20 other cell types or tissues"/>
</dbReference>
<dbReference type="GO" id="GO:0005634">
    <property type="term" value="C:nucleus"/>
    <property type="evidence" value="ECO:0000266"/>
    <property type="project" value="RGD"/>
</dbReference>
<dbReference type="GO" id="GO:0003677">
    <property type="term" value="F:DNA binding"/>
    <property type="evidence" value="ECO:0007669"/>
    <property type="project" value="UniProtKB-KW"/>
</dbReference>
<dbReference type="GO" id="GO:0035033">
    <property type="term" value="F:histone deacetylase regulator activity"/>
    <property type="evidence" value="ECO:0000266"/>
    <property type="project" value="RGD"/>
</dbReference>
<dbReference type="GO" id="GO:0051131">
    <property type="term" value="P:chaperone-mediated protein complex assembly"/>
    <property type="evidence" value="ECO:0000266"/>
    <property type="project" value="RGD"/>
</dbReference>
<dbReference type="GO" id="GO:0007507">
    <property type="term" value="P:heart development"/>
    <property type="evidence" value="ECO:0000266"/>
    <property type="project" value="RGD"/>
</dbReference>
<dbReference type="GO" id="GO:0048286">
    <property type="term" value="P:lung alveolus development"/>
    <property type="evidence" value="ECO:0000266"/>
    <property type="project" value="RGD"/>
</dbReference>
<dbReference type="GO" id="GO:0045596">
    <property type="term" value="P:negative regulation of cell differentiation"/>
    <property type="evidence" value="ECO:0000266"/>
    <property type="project" value="RGD"/>
</dbReference>
<dbReference type="GO" id="GO:0000122">
    <property type="term" value="P:negative regulation of transcription by RNA polymerase II"/>
    <property type="evidence" value="ECO:0000266"/>
    <property type="project" value="RGD"/>
</dbReference>
<dbReference type="GO" id="GO:1903598">
    <property type="term" value="P:positive regulation of gap junction assembly"/>
    <property type="evidence" value="ECO:0000266"/>
    <property type="project" value="RGD"/>
</dbReference>
<dbReference type="GO" id="GO:0043415">
    <property type="term" value="P:positive regulation of skeletal muscle tissue regeneration"/>
    <property type="evidence" value="ECO:0000266"/>
    <property type="project" value="RGD"/>
</dbReference>
<dbReference type="GO" id="GO:0051155">
    <property type="term" value="P:positive regulation of striated muscle cell differentiation"/>
    <property type="evidence" value="ECO:0000266"/>
    <property type="project" value="RGD"/>
</dbReference>
<dbReference type="GO" id="GO:0008016">
    <property type="term" value="P:regulation of heart contraction"/>
    <property type="evidence" value="ECO:0000266"/>
    <property type="project" value="RGD"/>
</dbReference>
<dbReference type="GO" id="GO:0006357">
    <property type="term" value="P:regulation of transcription by RNA polymerase II"/>
    <property type="evidence" value="ECO:0000318"/>
    <property type="project" value="GO_Central"/>
</dbReference>
<dbReference type="GO" id="GO:0001829">
    <property type="term" value="P:trophectodermal cell differentiation"/>
    <property type="evidence" value="ECO:0000266"/>
    <property type="project" value="RGD"/>
</dbReference>
<dbReference type="CDD" id="cd00086">
    <property type="entry name" value="homeodomain"/>
    <property type="match status" value="1"/>
</dbReference>
<dbReference type="FunFam" id="1.10.10.60:FF:000213">
    <property type="entry name" value="Homeodomain-only protein"/>
    <property type="match status" value="1"/>
</dbReference>
<dbReference type="Gene3D" id="1.10.10.60">
    <property type="entry name" value="Homeodomain-like"/>
    <property type="match status" value="1"/>
</dbReference>
<dbReference type="InterPro" id="IPR001356">
    <property type="entry name" value="HD"/>
</dbReference>
<dbReference type="InterPro" id="IPR009057">
    <property type="entry name" value="Homeodomain-like_sf"/>
</dbReference>
<dbReference type="InterPro" id="IPR039162">
    <property type="entry name" value="HOPX"/>
</dbReference>
<dbReference type="PANTHER" id="PTHR21408">
    <property type="entry name" value="HOMEODOMAIN-ONLY PROTEIN"/>
    <property type="match status" value="1"/>
</dbReference>
<dbReference type="PANTHER" id="PTHR21408:SF1">
    <property type="entry name" value="HOMEODOMAIN-ONLY PROTEIN"/>
    <property type="match status" value="1"/>
</dbReference>
<dbReference type="Pfam" id="PF00046">
    <property type="entry name" value="Homeodomain"/>
    <property type="match status" value="1"/>
</dbReference>
<dbReference type="SMART" id="SM00389">
    <property type="entry name" value="HOX"/>
    <property type="match status" value="1"/>
</dbReference>
<dbReference type="SUPFAM" id="SSF46689">
    <property type="entry name" value="Homeodomain-like"/>
    <property type="match status" value="1"/>
</dbReference>
<dbReference type="PROSITE" id="PS50071">
    <property type="entry name" value="HOMEOBOX_2"/>
    <property type="match status" value="1"/>
</dbReference>
<name>HOP_RAT</name>
<keyword id="KW-0217">Developmental protein</keyword>
<keyword id="KW-0371">Homeobox</keyword>
<keyword id="KW-0539">Nucleus</keyword>
<keyword id="KW-1185">Reference proteome</keyword>
<keyword id="KW-0678">Repressor</keyword>
<keyword id="KW-0804">Transcription</keyword>
<keyword id="KW-0805">Transcription regulation</keyword>
<reference key="1">
    <citation type="journal article" date="2002" name="Mech. Dev.">
        <title>Expression of mOb1, a novel atypical 73 amino acid K50-homeodomain protein, during mouse development.</title>
        <authorList>
            <person name="Adu J."/>
            <person name="Leong F.T."/>
            <person name="Smith N.R."/>
            <person name="Leek J.P."/>
            <person name="Markham A.F."/>
            <person name="Robinson P.A."/>
            <person name="Mighell A.J."/>
        </authorList>
    </citation>
    <scope>NUCLEOTIDE SEQUENCE [MRNA]</scope>
</reference>
<reference key="2">
    <citation type="submission" date="2002-01" db="EMBL/GenBank/DDBJ databases">
        <authorList>
            <person name="Jin K."/>
            <person name="Chen J."/>
            <person name="Graham S.H."/>
            <person name="Simon R.P."/>
        </authorList>
    </citation>
    <scope>NUCLEOTIDE SEQUENCE [MRNA]</scope>
    <source>
        <strain>Sprague-Dawley</strain>
        <tissue>Brain</tissue>
    </source>
</reference>
<reference key="3">
    <citation type="journal article" date="2004" name="Genome Res.">
        <title>The status, quality, and expansion of the NIH full-length cDNA project: the Mammalian Gene Collection (MGC).</title>
        <authorList>
            <consortium name="The MGC Project Team"/>
        </authorList>
    </citation>
    <scope>NUCLEOTIDE SEQUENCE [LARGE SCALE MRNA]</scope>
    <source>
        <tissue>Lung</tissue>
    </source>
</reference>
<reference key="4">
    <citation type="journal article" date="2002" name="Cell">
        <title>Modulation of cardiac growth and development by HOP, an unusual homeodomain protein.</title>
        <authorList>
            <person name="Shin C.H."/>
            <person name="Liu Z.-P."/>
            <person name="Passier R."/>
            <person name="Zhang C.-L."/>
            <person name="Wang D.-Z."/>
            <person name="Harris T.M."/>
            <person name="Yamagishi H."/>
            <person name="Richardson J.A."/>
            <person name="Childs G."/>
            <person name="Olson E.N."/>
        </authorList>
    </citation>
    <scope>SUBCELLULAR LOCATION</scope>
</reference>
<reference key="5">
    <citation type="journal article" date="2012" name="Nat. Commun.">
        <title>Quantitative maps of protein phosphorylation sites across 14 different rat organs and tissues.</title>
        <authorList>
            <person name="Lundby A."/>
            <person name="Secher A."/>
            <person name="Lage K."/>
            <person name="Nordsborg N.B."/>
            <person name="Dmytriyev A."/>
            <person name="Lundby C."/>
            <person name="Olsen J.V."/>
        </authorList>
    </citation>
    <scope>IDENTIFICATION BY MASS SPECTROMETRY [LARGE SCALE ANALYSIS]</scope>
</reference>